<evidence type="ECO:0000255" key="1">
    <source>
        <dbReference type="HAMAP-Rule" id="MF_00313"/>
    </source>
</evidence>
<name>GLSA_OCEIH</name>
<sequence length="331" mass="36507">MVQGSVNLNTERGKEWLQDYVDNWVNFYQKQTDEGKVASYIPRLEHADPNALGISIIGKNGTVIRSGDTDLEFSIQSISKVLSFIVACMERGLSYVLQRVDVEPTGESFNSIMHLEINQPKKPFNPLVNSGAITVSSLLNGRTSDQKLEPLYQLLEKILGHRPEIDVEVYVSERDTSMRNRAIGYYLLEEGYLESDLSITLETYFKHCSLNVTVDDLAMIGLVLSNDGVHPNTDEPLIPKQIARVAKSLMLTCGMYDASGKFASYVGIPAKSGVSGGILAVVPPRVRDQNLPFLEGCGIGVFGPALDKQGNSIAGIKLLRHIANQWDLSLF</sequence>
<protein>
    <recommendedName>
        <fullName evidence="1">Glutaminase</fullName>
        <ecNumber evidence="1">3.5.1.2</ecNumber>
    </recommendedName>
</protein>
<organism>
    <name type="scientific">Oceanobacillus iheyensis (strain DSM 14371 / CIP 107618 / JCM 11309 / KCTC 3954 / HTE831)</name>
    <dbReference type="NCBI Taxonomy" id="221109"/>
    <lineage>
        <taxon>Bacteria</taxon>
        <taxon>Bacillati</taxon>
        <taxon>Bacillota</taxon>
        <taxon>Bacilli</taxon>
        <taxon>Bacillales</taxon>
        <taxon>Bacillaceae</taxon>
        <taxon>Oceanobacillus</taxon>
    </lineage>
</organism>
<proteinExistence type="inferred from homology"/>
<dbReference type="EC" id="3.5.1.2" evidence="1"/>
<dbReference type="EMBL" id="BA000028">
    <property type="protein sequence ID" value="BAC12826.1"/>
    <property type="molecule type" value="Genomic_DNA"/>
</dbReference>
<dbReference type="RefSeq" id="WP_011065276.1">
    <property type="nucleotide sequence ID" value="NC_004193.1"/>
</dbReference>
<dbReference type="SMR" id="Q8CV87"/>
<dbReference type="STRING" id="221109.gene:10733091"/>
<dbReference type="KEGG" id="oih:OB0870"/>
<dbReference type="eggNOG" id="COG2066">
    <property type="taxonomic scope" value="Bacteria"/>
</dbReference>
<dbReference type="HOGENOM" id="CLU_027932_1_0_9"/>
<dbReference type="OrthoDB" id="9788822at2"/>
<dbReference type="PhylomeDB" id="Q8CV87"/>
<dbReference type="Proteomes" id="UP000000822">
    <property type="component" value="Chromosome"/>
</dbReference>
<dbReference type="GO" id="GO:0004359">
    <property type="term" value="F:glutaminase activity"/>
    <property type="evidence" value="ECO:0007669"/>
    <property type="project" value="UniProtKB-UniRule"/>
</dbReference>
<dbReference type="GO" id="GO:0006537">
    <property type="term" value="P:glutamate biosynthetic process"/>
    <property type="evidence" value="ECO:0007669"/>
    <property type="project" value="TreeGrafter"/>
</dbReference>
<dbReference type="GO" id="GO:0006543">
    <property type="term" value="P:glutamine catabolic process"/>
    <property type="evidence" value="ECO:0007669"/>
    <property type="project" value="TreeGrafter"/>
</dbReference>
<dbReference type="FunFam" id="3.40.710.10:FF:000005">
    <property type="entry name" value="Glutaminase"/>
    <property type="match status" value="1"/>
</dbReference>
<dbReference type="Gene3D" id="1.10.1500.10">
    <property type="match status" value="1"/>
</dbReference>
<dbReference type="Gene3D" id="3.40.710.10">
    <property type="entry name" value="DD-peptidase/beta-lactamase superfamily"/>
    <property type="match status" value="1"/>
</dbReference>
<dbReference type="HAMAP" id="MF_00313">
    <property type="entry name" value="Glutaminase"/>
    <property type="match status" value="1"/>
</dbReference>
<dbReference type="InterPro" id="IPR012338">
    <property type="entry name" value="Beta-lactam/transpept-like"/>
</dbReference>
<dbReference type="InterPro" id="IPR015868">
    <property type="entry name" value="Glutaminase"/>
</dbReference>
<dbReference type="NCBIfam" id="TIGR03814">
    <property type="entry name" value="Gln_ase"/>
    <property type="match status" value="1"/>
</dbReference>
<dbReference type="NCBIfam" id="NF009021">
    <property type="entry name" value="PRK12357.1"/>
    <property type="match status" value="1"/>
</dbReference>
<dbReference type="PANTHER" id="PTHR12544">
    <property type="entry name" value="GLUTAMINASE"/>
    <property type="match status" value="1"/>
</dbReference>
<dbReference type="PANTHER" id="PTHR12544:SF32">
    <property type="entry name" value="GLUTAMINASE 1"/>
    <property type="match status" value="1"/>
</dbReference>
<dbReference type="Pfam" id="PF04960">
    <property type="entry name" value="Glutaminase"/>
    <property type="match status" value="1"/>
</dbReference>
<dbReference type="SUPFAM" id="SSF56601">
    <property type="entry name" value="beta-lactamase/transpeptidase-like"/>
    <property type="match status" value="1"/>
</dbReference>
<accession>Q8CV87</accession>
<reference key="1">
    <citation type="journal article" date="2002" name="Nucleic Acids Res.">
        <title>Genome sequence of Oceanobacillus iheyensis isolated from the Iheya Ridge and its unexpected adaptive capabilities to extreme environments.</title>
        <authorList>
            <person name="Takami H."/>
            <person name="Takaki Y."/>
            <person name="Uchiyama I."/>
        </authorList>
    </citation>
    <scope>NUCLEOTIDE SEQUENCE [LARGE SCALE GENOMIC DNA]</scope>
    <source>
        <strain>DSM 14371 / CIP 107618 / JCM 11309 / KCTC 3954 / HTE831</strain>
    </source>
</reference>
<feature type="chain" id="PRO_0000110614" description="Glutaminase">
    <location>
        <begin position="1"/>
        <end position="331"/>
    </location>
</feature>
<feature type="binding site" evidence="1">
    <location>
        <position position="77"/>
    </location>
    <ligand>
        <name>substrate</name>
    </ligand>
</feature>
<feature type="binding site" evidence="1">
    <location>
        <position position="129"/>
    </location>
    <ligand>
        <name>substrate</name>
    </ligand>
</feature>
<feature type="binding site" evidence="1">
    <location>
        <position position="173"/>
    </location>
    <ligand>
        <name>substrate</name>
    </ligand>
</feature>
<feature type="binding site" evidence="1">
    <location>
        <position position="180"/>
    </location>
    <ligand>
        <name>substrate</name>
    </ligand>
</feature>
<feature type="binding site" evidence="1">
    <location>
        <position position="204"/>
    </location>
    <ligand>
        <name>substrate</name>
    </ligand>
</feature>
<feature type="binding site" evidence="1">
    <location>
        <position position="256"/>
    </location>
    <ligand>
        <name>substrate</name>
    </ligand>
</feature>
<feature type="binding site" evidence="1">
    <location>
        <position position="274"/>
    </location>
    <ligand>
        <name>substrate</name>
    </ligand>
</feature>
<gene>
    <name evidence="1" type="primary">glsA</name>
    <name type="ordered locus">OB0870</name>
</gene>
<keyword id="KW-0378">Hydrolase</keyword>
<keyword id="KW-1185">Reference proteome</keyword>
<comment type="catalytic activity">
    <reaction evidence="1">
        <text>L-glutamine + H2O = L-glutamate + NH4(+)</text>
        <dbReference type="Rhea" id="RHEA:15889"/>
        <dbReference type="ChEBI" id="CHEBI:15377"/>
        <dbReference type="ChEBI" id="CHEBI:28938"/>
        <dbReference type="ChEBI" id="CHEBI:29985"/>
        <dbReference type="ChEBI" id="CHEBI:58359"/>
        <dbReference type="EC" id="3.5.1.2"/>
    </reaction>
</comment>
<comment type="subunit">
    <text evidence="1">Homotetramer.</text>
</comment>
<comment type="similarity">
    <text evidence="1">Belongs to the glutaminase family.</text>
</comment>